<keyword id="KW-0560">Oxidoreductase</keyword>
<keyword id="KW-0670">Pyruvate</keyword>
<keyword id="KW-0786">Thiamine pyrophosphate</keyword>
<proteinExistence type="inferred from homology"/>
<dbReference type="EC" id="1.2.4.1"/>
<dbReference type="EMBL" id="CP000046">
    <property type="protein sequence ID" value="AAW37982.1"/>
    <property type="molecule type" value="Genomic_DNA"/>
</dbReference>
<dbReference type="RefSeq" id="WP_000035320.1">
    <property type="nucleotide sequence ID" value="NZ_JBGOFO010000002.1"/>
</dbReference>
<dbReference type="SMR" id="Q5HGZ1"/>
<dbReference type="KEGG" id="sac:SACOL1102"/>
<dbReference type="HOGENOM" id="CLU_029393_1_0_9"/>
<dbReference type="Proteomes" id="UP000000530">
    <property type="component" value="Chromosome"/>
</dbReference>
<dbReference type="GO" id="GO:0004739">
    <property type="term" value="F:pyruvate dehydrogenase (acetyl-transferring) activity"/>
    <property type="evidence" value="ECO:0007669"/>
    <property type="project" value="UniProtKB-EC"/>
</dbReference>
<dbReference type="GO" id="GO:0009083">
    <property type="term" value="P:branched-chain amino acid catabolic process"/>
    <property type="evidence" value="ECO:0007669"/>
    <property type="project" value="TreeGrafter"/>
</dbReference>
<dbReference type="CDD" id="cd02000">
    <property type="entry name" value="TPP_E1_PDC_ADC_BCADC"/>
    <property type="match status" value="1"/>
</dbReference>
<dbReference type="FunFam" id="3.40.50.970:FF:000023">
    <property type="entry name" value="Pyruvate dehydrogenase E1 component subunit alpha"/>
    <property type="match status" value="1"/>
</dbReference>
<dbReference type="Gene3D" id="3.40.50.970">
    <property type="match status" value="1"/>
</dbReference>
<dbReference type="InterPro" id="IPR050771">
    <property type="entry name" value="Alpha-ketoacid_DH_E1_comp"/>
</dbReference>
<dbReference type="InterPro" id="IPR001017">
    <property type="entry name" value="DH_E1"/>
</dbReference>
<dbReference type="InterPro" id="IPR017596">
    <property type="entry name" value="PdhA/BkdA"/>
</dbReference>
<dbReference type="InterPro" id="IPR029061">
    <property type="entry name" value="THDP-binding"/>
</dbReference>
<dbReference type="NCBIfam" id="TIGR03181">
    <property type="entry name" value="PDH_E1_alph_x"/>
    <property type="match status" value="1"/>
</dbReference>
<dbReference type="PANTHER" id="PTHR43380">
    <property type="entry name" value="2-OXOISOVALERATE DEHYDROGENASE SUBUNIT ALPHA, MITOCHONDRIAL"/>
    <property type="match status" value="1"/>
</dbReference>
<dbReference type="PANTHER" id="PTHR43380:SF1">
    <property type="entry name" value="2-OXOISOVALERATE DEHYDROGENASE SUBUNIT ALPHA, MITOCHONDRIAL"/>
    <property type="match status" value="1"/>
</dbReference>
<dbReference type="Pfam" id="PF00676">
    <property type="entry name" value="E1_dh"/>
    <property type="match status" value="1"/>
</dbReference>
<dbReference type="SUPFAM" id="SSF52518">
    <property type="entry name" value="Thiamin diphosphate-binding fold (THDP-binding)"/>
    <property type="match status" value="1"/>
</dbReference>
<organism>
    <name type="scientific">Staphylococcus aureus (strain COL)</name>
    <dbReference type="NCBI Taxonomy" id="93062"/>
    <lineage>
        <taxon>Bacteria</taxon>
        <taxon>Bacillati</taxon>
        <taxon>Bacillota</taxon>
        <taxon>Bacilli</taxon>
        <taxon>Bacillales</taxon>
        <taxon>Staphylococcaceae</taxon>
        <taxon>Staphylococcus</taxon>
    </lineage>
</organism>
<name>ODPA_STAAC</name>
<feature type="chain" id="PRO_0000162205" description="Pyruvate dehydrogenase E1 component subunit alpha">
    <location>
        <begin position="1"/>
        <end position="370"/>
    </location>
</feature>
<protein>
    <recommendedName>
        <fullName>Pyruvate dehydrogenase E1 component subunit alpha</fullName>
        <ecNumber>1.2.4.1</ecNumber>
    </recommendedName>
</protein>
<sequence length="370" mass="41383">MAPKLQAQFDAVKVLNDTQSKFEMVQILDENGNVVNEDLVPDLTDEQLVELMERMVWTRILDQRSISLNRQGRLGFYAPTAGQEASQLASQYALEKEDYILPGYRDVPQIIWHGLPLTEAFLFSRGHFKGNQFPEGVNALSPQIIIGAQYIQAAGVAFALKKRGKNAVAITYTGDGGSSQGDFYEGINFAAAYKAPAIFVIQNNNYAISTPRSKQTAAETLAQKAIAVGIPGIQVDGMDALAVYQATKEARDRAVAGEGPTLIETMTYRYGPHTMAGDDPTRYRTSDEDAEWEKKDPLVRFRKFLENKGLWNEDKENEVIERAKADIKAAIKEADNTEKQTVTSLMEIMYEDMPQNLAEQYEIYKEKESK</sequence>
<reference key="1">
    <citation type="journal article" date="2005" name="J. Bacteriol.">
        <title>Insights on evolution of virulence and resistance from the complete genome analysis of an early methicillin-resistant Staphylococcus aureus strain and a biofilm-producing methicillin-resistant Staphylococcus epidermidis strain.</title>
        <authorList>
            <person name="Gill S.R."/>
            <person name="Fouts D.E."/>
            <person name="Archer G.L."/>
            <person name="Mongodin E.F."/>
            <person name="DeBoy R.T."/>
            <person name="Ravel J."/>
            <person name="Paulsen I.T."/>
            <person name="Kolonay J.F."/>
            <person name="Brinkac L.M."/>
            <person name="Beanan M.J."/>
            <person name="Dodson R.J."/>
            <person name="Daugherty S.C."/>
            <person name="Madupu R."/>
            <person name="Angiuoli S.V."/>
            <person name="Durkin A.S."/>
            <person name="Haft D.H."/>
            <person name="Vamathevan J.J."/>
            <person name="Khouri H."/>
            <person name="Utterback T.R."/>
            <person name="Lee C."/>
            <person name="Dimitrov G."/>
            <person name="Jiang L."/>
            <person name="Qin H."/>
            <person name="Weidman J."/>
            <person name="Tran K."/>
            <person name="Kang K.H."/>
            <person name="Hance I.R."/>
            <person name="Nelson K.E."/>
            <person name="Fraser C.M."/>
        </authorList>
    </citation>
    <scope>NUCLEOTIDE SEQUENCE [LARGE SCALE GENOMIC DNA]</scope>
    <source>
        <strain>COL</strain>
    </source>
</reference>
<evidence type="ECO:0000250" key="1"/>
<comment type="function">
    <text evidence="1">The pyruvate dehydrogenase complex catalyzes the overall conversion of pyruvate to acetyl-CoA and CO(2). It contains multiple copies of three enzymatic components: pyruvate dehydrogenase (E1), dihydrolipoamide acetyltransferase (E2) and lipoamide dehydrogenase (E3) (By similarity).</text>
</comment>
<comment type="catalytic activity">
    <reaction>
        <text>N(6)-[(R)-lipoyl]-L-lysyl-[protein] + pyruvate + H(+) = N(6)-[(R)-S(8)-acetyldihydrolipoyl]-L-lysyl-[protein] + CO2</text>
        <dbReference type="Rhea" id="RHEA:19189"/>
        <dbReference type="Rhea" id="RHEA-COMP:10474"/>
        <dbReference type="Rhea" id="RHEA-COMP:10478"/>
        <dbReference type="ChEBI" id="CHEBI:15361"/>
        <dbReference type="ChEBI" id="CHEBI:15378"/>
        <dbReference type="ChEBI" id="CHEBI:16526"/>
        <dbReference type="ChEBI" id="CHEBI:83099"/>
        <dbReference type="ChEBI" id="CHEBI:83111"/>
        <dbReference type="EC" id="1.2.4.1"/>
    </reaction>
</comment>
<comment type="cofactor">
    <cofactor evidence="1">
        <name>thiamine diphosphate</name>
        <dbReference type="ChEBI" id="CHEBI:58937"/>
    </cofactor>
</comment>
<comment type="subunit">
    <text>Heterodimer of an alpha and a beta chain.</text>
</comment>
<accession>Q5HGZ1</accession>
<gene>
    <name type="primary">pdhA</name>
    <name type="ordered locus">SACOL1102</name>
</gene>